<feature type="chain" id="PRO_0000238871" description="Cytochrome c-type biogenesis protein CcmE">
    <location>
        <begin position="1"/>
        <end position="142"/>
    </location>
</feature>
<feature type="topological domain" description="Cytoplasmic" evidence="1">
    <location>
        <begin position="1"/>
        <end position="2"/>
    </location>
</feature>
<feature type="transmembrane region" description="Helical; Signal-anchor for type II membrane protein" evidence="1">
    <location>
        <begin position="3"/>
        <end position="23"/>
    </location>
</feature>
<feature type="topological domain" description="Periplasmic" evidence="1">
    <location>
        <begin position="24"/>
        <end position="142"/>
    </location>
</feature>
<feature type="binding site" description="covalent" evidence="1">
    <location>
        <position position="118"/>
    </location>
    <ligand>
        <name>heme</name>
        <dbReference type="ChEBI" id="CHEBI:30413"/>
    </ligand>
</feature>
<feature type="binding site" description="axial binding residue" evidence="1">
    <location>
        <position position="122"/>
    </location>
    <ligand>
        <name>heme</name>
        <dbReference type="ChEBI" id="CHEBI:30413"/>
    </ligand>
    <ligandPart>
        <name>Fe</name>
        <dbReference type="ChEBI" id="CHEBI:18248"/>
    </ligandPart>
</feature>
<proteinExistence type="inferred from homology"/>
<name>CCME_THET8</name>
<keyword id="KW-0997">Cell inner membrane</keyword>
<keyword id="KW-1003">Cell membrane</keyword>
<keyword id="KW-0201">Cytochrome c-type biogenesis</keyword>
<keyword id="KW-0349">Heme</keyword>
<keyword id="KW-0408">Iron</keyword>
<keyword id="KW-0472">Membrane</keyword>
<keyword id="KW-0479">Metal-binding</keyword>
<keyword id="KW-1185">Reference proteome</keyword>
<keyword id="KW-0735">Signal-anchor</keyword>
<keyword id="KW-0812">Transmembrane</keyword>
<keyword id="KW-1133">Transmembrane helix</keyword>
<sequence length="142" mass="15926">MKGKYLLGILVILGALGYMVFGGLGRNLVYFLTPSEYLQDQARYQNRPVRLGGLVKPGTVQYDKDRLELRFVLTDGVAEVPVFHKGTPPGMFKEGQGVVVEGRFQEGVFQGTNLLVKHSETYQPPKEGWTPEEVRKLIEEAQ</sequence>
<reference key="1">
    <citation type="submission" date="2004-11" db="EMBL/GenBank/DDBJ databases">
        <title>Complete genome sequence of Thermus thermophilus HB8.</title>
        <authorList>
            <person name="Masui R."/>
            <person name="Kurokawa K."/>
            <person name="Nakagawa N."/>
            <person name="Tokunaga F."/>
            <person name="Koyama Y."/>
            <person name="Shibata T."/>
            <person name="Oshima T."/>
            <person name="Yokoyama S."/>
            <person name="Yasunaga T."/>
            <person name="Kuramitsu S."/>
        </authorList>
    </citation>
    <scope>NUCLEOTIDE SEQUENCE [LARGE SCALE GENOMIC DNA]</scope>
    <source>
        <strain>ATCC 27634 / DSM 579 / HB8</strain>
    </source>
</reference>
<gene>
    <name evidence="1" type="primary">ccmE</name>
    <name evidence="1" type="synonym">cycJ</name>
    <name type="ordered locus">TTHA1405</name>
</gene>
<evidence type="ECO:0000255" key="1">
    <source>
        <dbReference type="HAMAP-Rule" id="MF_01959"/>
    </source>
</evidence>
<dbReference type="EMBL" id="AP008226">
    <property type="protein sequence ID" value="BAD71228.1"/>
    <property type="molecule type" value="Genomic_DNA"/>
</dbReference>
<dbReference type="RefSeq" id="WP_011228655.1">
    <property type="nucleotide sequence ID" value="NC_006461.1"/>
</dbReference>
<dbReference type="RefSeq" id="YP_144671.1">
    <property type="nucleotide sequence ID" value="NC_006461.1"/>
</dbReference>
<dbReference type="SMR" id="Q5SIG4"/>
<dbReference type="EnsemblBacteria" id="BAD71228">
    <property type="protein sequence ID" value="BAD71228"/>
    <property type="gene ID" value="BAD71228"/>
</dbReference>
<dbReference type="GeneID" id="3169131"/>
<dbReference type="KEGG" id="ttj:TTHA1405"/>
<dbReference type="PATRIC" id="fig|300852.9.peg.1379"/>
<dbReference type="eggNOG" id="COG2332">
    <property type="taxonomic scope" value="Bacteria"/>
</dbReference>
<dbReference type="HOGENOM" id="CLU_079503_2_0_0"/>
<dbReference type="PhylomeDB" id="Q5SIG4"/>
<dbReference type="Proteomes" id="UP000000532">
    <property type="component" value="Chromosome"/>
</dbReference>
<dbReference type="GO" id="GO:0005886">
    <property type="term" value="C:plasma membrane"/>
    <property type="evidence" value="ECO:0007669"/>
    <property type="project" value="UniProtKB-SubCell"/>
</dbReference>
<dbReference type="GO" id="GO:0020037">
    <property type="term" value="F:heme binding"/>
    <property type="evidence" value="ECO:0007669"/>
    <property type="project" value="InterPro"/>
</dbReference>
<dbReference type="GO" id="GO:0046872">
    <property type="term" value="F:metal ion binding"/>
    <property type="evidence" value="ECO:0007669"/>
    <property type="project" value="UniProtKB-KW"/>
</dbReference>
<dbReference type="GO" id="GO:0017004">
    <property type="term" value="P:cytochrome complex assembly"/>
    <property type="evidence" value="ECO:0007669"/>
    <property type="project" value="UniProtKB-KW"/>
</dbReference>
<dbReference type="Gene3D" id="2.40.50.140">
    <property type="entry name" value="Nucleic acid-binding proteins"/>
    <property type="match status" value="1"/>
</dbReference>
<dbReference type="HAMAP" id="MF_01959">
    <property type="entry name" value="CcmE"/>
    <property type="match status" value="1"/>
</dbReference>
<dbReference type="InterPro" id="IPR004329">
    <property type="entry name" value="CcmE"/>
</dbReference>
<dbReference type="InterPro" id="IPR036127">
    <property type="entry name" value="CcmE-like_sf"/>
</dbReference>
<dbReference type="InterPro" id="IPR012340">
    <property type="entry name" value="NA-bd_OB-fold"/>
</dbReference>
<dbReference type="NCBIfam" id="NF009727">
    <property type="entry name" value="PRK13254.1-1"/>
    <property type="match status" value="1"/>
</dbReference>
<dbReference type="PANTHER" id="PTHR34128">
    <property type="entry name" value="CYTOCHROME C-TYPE BIOGENESIS PROTEIN CCME HOMOLOG, MITOCHONDRIAL"/>
    <property type="match status" value="1"/>
</dbReference>
<dbReference type="PANTHER" id="PTHR34128:SF2">
    <property type="entry name" value="CYTOCHROME C-TYPE BIOGENESIS PROTEIN CCME HOMOLOG, MITOCHONDRIAL"/>
    <property type="match status" value="1"/>
</dbReference>
<dbReference type="Pfam" id="PF03100">
    <property type="entry name" value="CcmE"/>
    <property type="match status" value="1"/>
</dbReference>
<dbReference type="SUPFAM" id="SSF82093">
    <property type="entry name" value="Heme chaperone CcmE"/>
    <property type="match status" value="1"/>
</dbReference>
<organism>
    <name type="scientific">Thermus thermophilus (strain ATCC 27634 / DSM 579 / HB8)</name>
    <dbReference type="NCBI Taxonomy" id="300852"/>
    <lineage>
        <taxon>Bacteria</taxon>
        <taxon>Thermotogati</taxon>
        <taxon>Deinococcota</taxon>
        <taxon>Deinococci</taxon>
        <taxon>Thermales</taxon>
        <taxon>Thermaceae</taxon>
        <taxon>Thermus</taxon>
    </lineage>
</organism>
<comment type="function">
    <text evidence="1">Heme chaperone required for the biogenesis of c-type cytochromes. Transiently binds heme delivered by CcmC and transfers the heme to apo-cytochromes in a process facilitated by CcmF and CcmH.</text>
</comment>
<comment type="subcellular location">
    <subcellularLocation>
        <location evidence="1">Cell inner membrane</location>
        <topology evidence="1">Single-pass type II membrane protein</topology>
        <orientation evidence="1">Periplasmic side</orientation>
    </subcellularLocation>
</comment>
<comment type="similarity">
    <text evidence="1">Belongs to the CcmE/CycJ family.</text>
</comment>
<accession>Q5SIG4</accession>
<protein>
    <recommendedName>
        <fullName evidence="1">Cytochrome c-type biogenesis protein CcmE</fullName>
    </recommendedName>
    <alternativeName>
        <fullName evidence="1">Cytochrome c maturation protein E</fullName>
    </alternativeName>
    <alternativeName>
        <fullName evidence="1">Heme chaperone CcmE</fullName>
    </alternativeName>
</protein>